<evidence type="ECO:0000255" key="1">
    <source>
        <dbReference type="HAMAP-Rule" id="MF_00186"/>
    </source>
</evidence>
<gene>
    <name evidence="1" type="primary">glpK</name>
    <name type="ordered locus">BBR47_50370</name>
</gene>
<organism>
    <name type="scientific">Brevibacillus brevis (strain 47 / JCM 6285 / NBRC 100599)</name>
    <dbReference type="NCBI Taxonomy" id="358681"/>
    <lineage>
        <taxon>Bacteria</taxon>
        <taxon>Bacillati</taxon>
        <taxon>Bacillota</taxon>
        <taxon>Bacilli</taxon>
        <taxon>Bacillales</taxon>
        <taxon>Paenibacillaceae</taxon>
        <taxon>Brevibacillus</taxon>
    </lineage>
</organism>
<dbReference type="EC" id="2.7.1.30" evidence="1"/>
<dbReference type="EMBL" id="AP008955">
    <property type="protein sequence ID" value="BAH46014.1"/>
    <property type="molecule type" value="Genomic_DNA"/>
</dbReference>
<dbReference type="RefSeq" id="WP_015893267.1">
    <property type="nucleotide sequence ID" value="NC_012491.1"/>
</dbReference>
<dbReference type="SMR" id="C0Z5A8"/>
<dbReference type="STRING" id="358681.BBR47_50370"/>
<dbReference type="KEGG" id="bbe:BBR47_50370"/>
<dbReference type="eggNOG" id="COG0554">
    <property type="taxonomic scope" value="Bacteria"/>
</dbReference>
<dbReference type="HOGENOM" id="CLU_009281_2_3_9"/>
<dbReference type="UniPathway" id="UPA00618">
    <property type="reaction ID" value="UER00672"/>
</dbReference>
<dbReference type="Proteomes" id="UP000001877">
    <property type="component" value="Chromosome"/>
</dbReference>
<dbReference type="GO" id="GO:0005829">
    <property type="term" value="C:cytosol"/>
    <property type="evidence" value="ECO:0007669"/>
    <property type="project" value="TreeGrafter"/>
</dbReference>
<dbReference type="GO" id="GO:0005524">
    <property type="term" value="F:ATP binding"/>
    <property type="evidence" value="ECO:0007669"/>
    <property type="project" value="UniProtKB-UniRule"/>
</dbReference>
<dbReference type="GO" id="GO:0004370">
    <property type="term" value="F:glycerol kinase activity"/>
    <property type="evidence" value="ECO:0000250"/>
    <property type="project" value="UniProtKB"/>
</dbReference>
<dbReference type="GO" id="GO:0019563">
    <property type="term" value="P:glycerol catabolic process"/>
    <property type="evidence" value="ECO:0007669"/>
    <property type="project" value="UniProtKB-UniRule"/>
</dbReference>
<dbReference type="GO" id="GO:0006071">
    <property type="term" value="P:glycerol metabolic process"/>
    <property type="evidence" value="ECO:0000250"/>
    <property type="project" value="UniProtKB"/>
</dbReference>
<dbReference type="GO" id="GO:0006072">
    <property type="term" value="P:glycerol-3-phosphate metabolic process"/>
    <property type="evidence" value="ECO:0007669"/>
    <property type="project" value="InterPro"/>
</dbReference>
<dbReference type="CDD" id="cd07786">
    <property type="entry name" value="FGGY_EcGK_like"/>
    <property type="match status" value="1"/>
</dbReference>
<dbReference type="FunFam" id="3.30.420.40:FF:000007">
    <property type="entry name" value="Glycerol kinase"/>
    <property type="match status" value="1"/>
</dbReference>
<dbReference type="FunFam" id="3.30.420.40:FF:000008">
    <property type="entry name" value="Glycerol kinase"/>
    <property type="match status" value="1"/>
</dbReference>
<dbReference type="Gene3D" id="3.30.420.40">
    <property type="match status" value="2"/>
</dbReference>
<dbReference type="HAMAP" id="MF_00186">
    <property type="entry name" value="Glycerol_kin"/>
    <property type="match status" value="1"/>
</dbReference>
<dbReference type="InterPro" id="IPR043129">
    <property type="entry name" value="ATPase_NBD"/>
</dbReference>
<dbReference type="InterPro" id="IPR000577">
    <property type="entry name" value="Carb_kinase_FGGY"/>
</dbReference>
<dbReference type="InterPro" id="IPR018483">
    <property type="entry name" value="Carb_kinase_FGGY_CS"/>
</dbReference>
<dbReference type="InterPro" id="IPR018485">
    <property type="entry name" value="FGGY_C"/>
</dbReference>
<dbReference type="InterPro" id="IPR018484">
    <property type="entry name" value="FGGY_N"/>
</dbReference>
<dbReference type="InterPro" id="IPR005999">
    <property type="entry name" value="Glycerol_kin"/>
</dbReference>
<dbReference type="NCBIfam" id="TIGR01311">
    <property type="entry name" value="glycerol_kin"/>
    <property type="match status" value="1"/>
</dbReference>
<dbReference type="NCBIfam" id="NF000756">
    <property type="entry name" value="PRK00047.1"/>
    <property type="match status" value="1"/>
</dbReference>
<dbReference type="PANTHER" id="PTHR10196:SF69">
    <property type="entry name" value="GLYCEROL KINASE"/>
    <property type="match status" value="1"/>
</dbReference>
<dbReference type="PANTHER" id="PTHR10196">
    <property type="entry name" value="SUGAR KINASE"/>
    <property type="match status" value="1"/>
</dbReference>
<dbReference type="Pfam" id="PF02782">
    <property type="entry name" value="FGGY_C"/>
    <property type="match status" value="1"/>
</dbReference>
<dbReference type="Pfam" id="PF00370">
    <property type="entry name" value="FGGY_N"/>
    <property type="match status" value="1"/>
</dbReference>
<dbReference type="PIRSF" id="PIRSF000538">
    <property type="entry name" value="GlpK"/>
    <property type="match status" value="1"/>
</dbReference>
<dbReference type="SUPFAM" id="SSF53067">
    <property type="entry name" value="Actin-like ATPase domain"/>
    <property type="match status" value="2"/>
</dbReference>
<dbReference type="PROSITE" id="PS00933">
    <property type="entry name" value="FGGY_KINASES_1"/>
    <property type="match status" value="1"/>
</dbReference>
<dbReference type="PROSITE" id="PS00445">
    <property type="entry name" value="FGGY_KINASES_2"/>
    <property type="match status" value="1"/>
</dbReference>
<feature type="chain" id="PRO_1000124184" description="Glycerol kinase">
    <location>
        <begin position="1"/>
        <end position="499"/>
    </location>
</feature>
<feature type="binding site" evidence="1">
    <location>
        <position position="13"/>
    </location>
    <ligand>
        <name>ADP</name>
        <dbReference type="ChEBI" id="CHEBI:456216"/>
    </ligand>
</feature>
<feature type="binding site" evidence="1">
    <location>
        <position position="13"/>
    </location>
    <ligand>
        <name>ATP</name>
        <dbReference type="ChEBI" id="CHEBI:30616"/>
    </ligand>
</feature>
<feature type="binding site" evidence="1">
    <location>
        <position position="13"/>
    </location>
    <ligand>
        <name>sn-glycerol 3-phosphate</name>
        <dbReference type="ChEBI" id="CHEBI:57597"/>
    </ligand>
</feature>
<feature type="binding site" evidence="1">
    <location>
        <position position="14"/>
    </location>
    <ligand>
        <name>ATP</name>
        <dbReference type="ChEBI" id="CHEBI:30616"/>
    </ligand>
</feature>
<feature type="binding site" evidence="1">
    <location>
        <position position="15"/>
    </location>
    <ligand>
        <name>ATP</name>
        <dbReference type="ChEBI" id="CHEBI:30616"/>
    </ligand>
</feature>
<feature type="binding site" evidence="1">
    <location>
        <position position="17"/>
    </location>
    <ligand>
        <name>ADP</name>
        <dbReference type="ChEBI" id="CHEBI:456216"/>
    </ligand>
</feature>
<feature type="binding site" evidence="1">
    <location>
        <position position="83"/>
    </location>
    <ligand>
        <name>glycerol</name>
        <dbReference type="ChEBI" id="CHEBI:17754"/>
    </ligand>
</feature>
<feature type="binding site" evidence="1">
    <location>
        <position position="83"/>
    </location>
    <ligand>
        <name>sn-glycerol 3-phosphate</name>
        <dbReference type="ChEBI" id="CHEBI:57597"/>
    </ligand>
</feature>
<feature type="binding site" evidence="1">
    <location>
        <position position="84"/>
    </location>
    <ligand>
        <name>glycerol</name>
        <dbReference type="ChEBI" id="CHEBI:17754"/>
    </ligand>
</feature>
<feature type="binding site" evidence="1">
    <location>
        <position position="84"/>
    </location>
    <ligand>
        <name>sn-glycerol 3-phosphate</name>
        <dbReference type="ChEBI" id="CHEBI:57597"/>
    </ligand>
</feature>
<feature type="binding site" evidence="1">
    <location>
        <position position="135"/>
    </location>
    <ligand>
        <name>glycerol</name>
        <dbReference type="ChEBI" id="CHEBI:17754"/>
    </ligand>
</feature>
<feature type="binding site" evidence="1">
    <location>
        <position position="135"/>
    </location>
    <ligand>
        <name>sn-glycerol 3-phosphate</name>
        <dbReference type="ChEBI" id="CHEBI:57597"/>
    </ligand>
</feature>
<feature type="binding site" evidence="1">
    <location>
        <position position="244"/>
    </location>
    <ligand>
        <name>glycerol</name>
        <dbReference type="ChEBI" id="CHEBI:17754"/>
    </ligand>
</feature>
<feature type="binding site" evidence="1">
    <location>
        <position position="244"/>
    </location>
    <ligand>
        <name>sn-glycerol 3-phosphate</name>
        <dbReference type="ChEBI" id="CHEBI:57597"/>
    </ligand>
</feature>
<feature type="binding site" evidence="1">
    <location>
        <position position="245"/>
    </location>
    <ligand>
        <name>glycerol</name>
        <dbReference type="ChEBI" id="CHEBI:17754"/>
    </ligand>
</feature>
<feature type="binding site" evidence="1">
    <location>
        <position position="266"/>
    </location>
    <ligand>
        <name>ADP</name>
        <dbReference type="ChEBI" id="CHEBI:456216"/>
    </ligand>
</feature>
<feature type="binding site" evidence="1">
    <location>
        <position position="266"/>
    </location>
    <ligand>
        <name>ATP</name>
        <dbReference type="ChEBI" id="CHEBI:30616"/>
    </ligand>
</feature>
<feature type="binding site" evidence="1">
    <location>
        <position position="309"/>
    </location>
    <ligand>
        <name>ADP</name>
        <dbReference type="ChEBI" id="CHEBI:456216"/>
    </ligand>
</feature>
<feature type="binding site" evidence="1">
    <location>
        <position position="309"/>
    </location>
    <ligand>
        <name>ATP</name>
        <dbReference type="ChEBI" id="CHEBI:30616"/>
    </ligand>
</feature>
<feature type="binding site" evidence="1">
    <location>
        <position position="313"/>
    </location>
    <ligand>
        <name>ATP</name>
        <dbReference type="ChEBI" id="CHEBI:30616"/>
    </ligand>
</feature>
<feature type="binding site" evidence="1">
    <location>
        <position position="410"/>
    </location>
    <ligand>
        <name>ADP</name>
        <dbReference type="ChEBI" id="CHEBI:456216"/>
    </ligand>
</feature>
<feature type="binding site" evidence="1">
    <location>
        <position position="410"/>
    </location>
    <ligand>
        <name>ATP</name>
        <dbReference type="ChEBI" id="CHEBI:30616"/>
    </ligand>
</feature>
<feature type="binding site" evidence="1">
    <location>
        <position position="414"/>
    </location>
    <ligand>
        <name>ADP</name>
        <dbReference type="ChEBI" id="CHEBI:456216"/>
    </ligand>
</feature>
<reference key="1">
    <citation type="submission" date="2005-03" db="EMBL/GenBank/DDBJ databases">
        <title>Brevibacillus brevis strain 47, complete genome.</title>
        <authorList>
            <person name="Hosoyama A."/>
            <person name="Yamada R."/>
            <person name="Hongo Y."/>
            <person name="Terui Y."/>
            <person name="Ankai A."/>
            <person name="Masuyama W."/>
            <person name="Sekiguchi M."/>
            <person name="Takeda T."/>
            <person name="Asano K."/>
            <person name="Ohji S."/>
            <person name="Ichikawa N."/>
            <person name="Narita S."/>
            <person name="Aoki N."/>
            <person name="Miura H."/>
            <person name="Matsushita S."/>
            <person name="Sekigawa T."/>
            <person name="Yamagata H."/>
            <person name="Yoshikawa H."/>
            <person name="Udaka S."/>
            <person name="Tanikawa S."/>
            <person name="Fujita N."/>
        </authorList>
    </citation>
    <scope>NUCLEOTIDE SEQUENCE [LARGE SCALE GENOMIC DNA]</scope>
    <source>
        <strain>47 / JCM 6285 / NBRC 100599</strain>
    </source>
</reference>
<comment type="function">
    <text evidence="1">Key enzyme in the regulation of glycerol uptake and metabolism. Catalyzes the phosphorylation of glycerol to yield sn-glycerol 3-phosphate.</text>
</comment>
<comment type="catalytic activity">
    <reaction evidence="1">
        <text>glycerol + ATP = sn-glycerol 3-phosphate + ADP + H(+)</text>
        <dbReference type="Rhea" id="RHEA:21644"/>
        <dbReference type="ChEBI" id="CHEBI:15378"/>
        <dbReference type="ChEBI" id="CHEBI:17754"/>
        <dbReference type="ChEBI" id="CHEBI:30616"/>
        <dbReference type="ChEBI" id="CHEBI:57597"/>
        <dbReference type="ChEBI" id="CHEBI:456216"/>
        <dbReference type="EC" id="2.7.1.30"/>
    </reaction>
</comment>
<comment type="activity regulation">
    <text evidence="1">Activated by phosphorylation and inhibited by fructose 1,6-bisphosphate (FBP).</text>
</comment>
<comment type="pathway">
    <text evidence="1">Polyol metabolism; glycerol degradation via glycerol kinase pathway; sn-glycerol 3-phosphate from glycerol: step 1/1.</text>
</comment>
<comment type="subunit">
    <text evidence="1">Homotetramer and homodimer (in equilibrium).</text>
</comment>
<comment type="similarity">
    <text evidence="1">Belongs to the FGGY kinase family.</text>
</comment>
<proteinExistence type="inferred from homology"/>
<protein>
    <recommendedName>
        <fullName evidence="1">Glycerol kinase</fullName>
        <ecNumber evidence="1">2.7.1.30</ecNumber>
    </recommendedName>
    <alternativeName>
        <fullName evidence="1">ATP:glycerol 3-phosphotransferase</fullName>
    </alternativeName>
    <alternativeName>
        <fullName evidence="1">Glycerokinase</fullName>
        <shortName evidence="1">GK</shortName>
    </alternativeName>
</protein>
<name>GLPK_BREBN</name>
<accession>C0Z5A8</accession>
<sequence>MENKYMLSLDQGTTSSRAILFDKSGAIIGVAQKEFTQIYPKPGWVEHNAEEIWESQLEVLKAVLLENHVKPEEIAGIGITNQRETTVVWDKHTGKPIHHAIVWQSRQSIDICNQLKEQGFEQTVREKTGLLIDAYFSGTKVKWLLDHVEGARERAEKGDLLFGTIDTWLIWKLTNGLVHVTDYSNASRTLMFNIHSLEWDDELLNMLQIPKSMLPAVRPSSEMYGYTDEKLFEFQIPIAGIAGDQQAALFGQACFAEGQAKNTYGTGCFMLMNTGEKAVASKNGLLTTIAWGVDGKVEYALEGSIFVAGAAIQWLRDGLKLIEKSSDSEKHALAVDTTDGVYMVPAFVGLGAPYWDMEARGAIFGLTRGTTEDHLIRAALESLAYQTRDVLEAMEADSGIRLQKLAVDGGAVANNFLMQFQSDILNTEVERPRVNETTALGAAYLAGLAVGYWGSKEDIVNNKVVERSFSPDMADEVRQGLYAGWKQAVTATMGYKIRH</sequence>
<keyword id="KW-0067">ATP-binding</keyword>
<keyword id="KW-0319">Glycerol metabolism</keyword>
<keyword id="KW-0418">Kinase</keyword>
<keyword id="KW-0547">Nucleotide-binding</keyword>
<keyword id="KW-1185">Reference proteome</keyword>
<keyword id="KW-0808">Transferase</keyword>